<name>COX2_PERAM</name>
<feature type="chain" id="PRO_0000183656" description="Cytochrome c oxidase subunit 2">
    <location>
        <begin position="1"/>
        <end position="228"/>
    </location>
</feature>
<feature type="topological domain" description="Mitochondrial intermembrane" evidence="2">
    <location>
        <begin position="1"/>
        <end position="26"/>
    </location>
</feature>
<feature type="transmembrane region" description="Helical" evidence="2">
    <location>
        <begin position="27"/>
        <end position="48"/>
    </location>
</feature>
<feature type="topological domain" description="Mitochondrial matrix" evidence="2">
    <location>
        <begin position="49"/>
        <end position="62"/>
    </location>
</feature>
<feature type="transmembrane region" description="Helical" evidence="2">
    <location>
        <begin position="63"/>
        <end position="82"/>
    </location>
</feature>
<feature type="topological domain" description="Mitochondrial intermembrane" evidence="2">
    <location>
        <begin position="83"/>
        <end position="228"/>
    </location>
</feature>
<feature type="binding site" evidence="1">
    <location>
        <position position="161"/>
    </location>
    <ligand>
        <name>Cu cation</name>
        <dbReference type="ChEBI" id="CHEBI:23378"/>
        <label>A1</label>
    </ligand>
</feature>
<feature type="binding site" evidence="1">
    <location>
        <position position="196"/>
    </location>
    <ligand>
        <name>Cu cation</name>
        <dbReference type="ChEBI" id="CHEBI:23378"/>
        <label>A1</label>
    </ligand>
</feature>
<feature type="binding site" evidence="1">
    <location>
        <position position="196"/>
    </location>
    <ligand>
        <name>Cu cation</name>
        <dbReference type="ChEBI" id="CHEBI:23378"/>
        <label>A2</label>
    </ligand>
</feature>
<feature type="binding site" evidence="1">
    <location>
        <position position="198"/>
    </location>
    <ligand>
        <name>Cu cation</name>
        <dbReference type="ChEBI" id="CHEBI:23378"/>
        <label>A2</label>
    </ligand>
</feature>
<feature type="binding site" evidence="1">
    <location>
        <position position="198"/>
    </location>
    <ligand>
        <name>Mg(2+)</name>
        <dbReference type="ChEBI" id="CHEBI:18420"/>
        <note>ligand shared with subunit 1</note>
    </ligand>
</feature>
<feature type="binding site" evidence="1">
    <location>
        <position position="200"/>
    </location>
    <ligand>
        <name>Cu cation</name>
        <dbReference type="ChEBI" id="CHEBI:23378"/>
        <label>A1</label>
    </ligand>
</feature>
<feature type="binding site" evidence="1">
    <location>
        <position position="200"/>
    </location>
    <ligand>
        <name>Cu cation</name>
        <dbReference type="ChEBI" id="CHEBI:23378"/>
        <label>A2</label>
    </ligand>
</feature>
<feature type="binding site" evidence="1">
    <location>
        <position position="204"/>
    </location>
    <ligand>
        <name>Cu cation</name>
        <dbReference type="ChEBI" id="CHEBI:23378"/>
        <label>A2</label>
    </ligand>
</feature>
<feature type="binding site" evidence="1">
    <location>
        <position position="207"/>
    </location>
    <ligand>
        <name>Cu cation</name>
        <dbReference type="ChEBI" id="CHEBI:23378"/>
        <label>A1</label>
    </ligand>
</feature>
<proteinExistence type="inferred from homology"/>
<accession>P29877</accession>
<reference key="1">
    <citation type="journal article" date="1992" name="Mol. Phylogenet. Evol.">
        <title>Evolution of the mitochondrial cytochrome oxidase II gene among 10 orders of insects.</title>
        <authorList>
            <person name="Liu H."/>
            <person name="Beckenbach A.T."/>
        </authorList>
    </citation>
    <scope>NUCLEOTIDE SEQUENCE [GENOMIC DNA]</scope>
</reference>
<evidence type="ECO:0000250" key="1">
    <source>
        <dbReference type="UniProtKB" id="P00410"/>
    </source>
</evidence>
<evidence type="ECO:0000255" key="2"/>
<evidence type="ECO:0000305" key="3"/>
<organism>
    <name type="scientific">Periplaneta americana</name>
    <name type="common">American cockroach</name>
    <name type="synonym">Blatta americana</name>
    <dbReference type="NCBI Taxonomy" id="6978"/>
    <lineage>
        <taxon>Eukaryota</taxon>
        <taxon>Metazoa</taxon>
        <taxon>Ecdysozoa</taxon>
        <taxon>Arthropoda</taxon>
        <taxon>Hexapoda</taxon>
        <taxon>Insecta</taxon>
        <taxon>Pterygota</taxon>
        <taxon>Neoptera</taxon>
        <taxon>Polyneoptera</taxon>
        <taxon>Dictyoptera</taxon>
        <taxon>Blattodea</taxon>
        <taxon>Blattoidea</taxon>
        <taxon>Blattidae</taxon>
        <taxon>Blattinae</taxon>
        <taxon>Periplaneta</taxon>
    </lineage>
</organism>
<keyword id="KW-0186">Copper</keyword>
<keyword id="KW-0249">Electron transport</keyword>
<keyword id="KW-0460">Magnesium</keyword>
<keyword id="KW-0472">Membrane</keyword>
<keyword id="KW-0479">Metal-binding</keyword>
<keyword id="KW-0496">Mitochondrion</keyword>
<keyword id="KW-0999">Mitochondrion inner membrane</keyword>
<keyword id="KW-0679">Respiratory chain</keyword>
<keyword id="KW-1278">Translocase</keyword>
<keyword id="KW-0812">Transmembrane</keyword>
<keyword id="KW-1133">Transmembrane helix</keyword>
<keyword id="KW-0813">Transport</keyword>
<dbReference type="EC" id="7.1.1.9"/>
<dbReference type="EMBL" id="M83971">
    <property type="protein sequence ID" value="AAA32019.1"/>
    <property type="molecule type" value="Genomic_DNA"/>
</dbReference>
<dbReference type="PIR" id="B38941">
    <property type="entry name" value="B38941"/>
</dbReference>
<dbReference type="SMR" id="P29877"/>
<dbReference type="GO" id="GO:0005743">
    <property type="term" value="C:mitochondrial inner membrane"/>
    <property type="evidence" value="ECO:0007669"/>
    <property type="project" value="UniProtKB-SubCell"/>
</dbReference>
<dbReference type="GO" id="GO:0005507">
    <property type="term" value="F:copper ion binding"/>
    <property type="evidence" value="ECO:0007669"/>
    <property type="project" value="InterPro"/>
</dbReference>
<dbReference type="GO" id="GO:0004129">
    <property type="term" value="F:cytochrome-c oxidase activity"/>
    <property type="evidence" value="ECO:0007669"/>
    <property type="project" value="UniProtKB-EC"/>
</dbReference>
<dbReference type="GO" id="GO:0042773">
    <property type="term" value="P:ATP synthesis coupled electron transport"/>
    <property type="evidence" value="ECO:0007669"/>
    <property type="project" value="TreeGrafter"/>
</dbReference>
<dbReference type="CDD" id="cd13912">
    <property type="entry name" value="CcO_II_C"/>
    <property type="match status" value="1"/>
</dbReference>
<dbReference type="FunFam" id="1.10.287.90:FF:000001">
    <property type="entry name" value="Cytochrome c oxidase subunit 2"/>
    <property type="match status" value="1"/>
</dbReference>
<dbReference type="FunFam" id="2.60.40.420:FF:000001">
    <property type="entry name" value="Cytochrome c oxidase subunit 2"/>
    <property type="match status" value="1"/>
</dbReference>
<dbReference type="Gene3D" id="1.10.287.90">
    <property type="match status" value="1"/>
</dbReference>
<dbReference type="Gene3D" id="2.60.40.420">
    <property type="entry name" value="Cupredoxins - blue copper proteins"/>
    <property type="match status" value="1"/>
</dbReference>
<dbReference type="InterPro" id="IPR045187">
    <property type="entry name" value="CcO_II"/>
</dbReference>
<dbReference type="InterPro" id="IPR002429">
    <property type="entry name" value="CcO_II-like_C"/>
</dbReference>
<dbReference type="InterPro" id="IPR034210">
    <property type="entry name" value="CcO_II_C"/>
</dbReference>
<dbReference type="InterPro" id="IPR001505">
    <property type="entry name" value="Copper_CuA"/>
</dbReference>
<dbReference type="InterPro" id="IPR008972">
    <property type="entry name" value="Cupredoxin"/>
</dbReference>
<dbReference type="InterPro" id="IPR014222">
    <property type="entry name" value="Cyt_c_oxidase_su2"/>
</dbReference>
<dbReference type="InterPro" id="IPR011759">
    <property type="entry name" value="Cyt_c_oxidase_su2_TM_dom"/>
</dbReference>
<dbReference type="InterPro" id="IPR036257">
    <property type="entry name" value="Cyt_c_oxidase_su2_TM_sf"/>
</dbReference>
<dbReference type="NCBIfam" id="TIGR02866">
    <property type="entry name" value="CoxB"/>
    <property type="match status" value="1"/>
</dbReference>
<dbReference type="PANTHER" id="PTHR22888:SF9">
    <property type="entry name" value="CYTOCHROME C OXIDASE SUBUNIT 2"/>
    <property type="match status" value="1"/>
</dbReference>
<dbReference type="PANTHER" id="PTHR22888">
    <property type="entry name" value="CYTOCHROME C OXIDASE, SUBUNIT II"/>
    <property type="match status" value="1"/>
</dbReference>
<dbReference type="Pfam" id="PF00116">
    <property type="entry name" value="COX2"/>
    <property type="match status" value="1"/>
</dbReference>
<dbReference type="Pfam" id="PF02790">
    <property type="entry name" value="COX2_TM"/>
    <property type="match status" value="1"/>
</dbReference>
<dbReference type="PRINTS" id="PR01166">
    <property type="entry name" value="CYCOXIDASEII"/>
</dbReference>
<dbReference type="SUPFAM" id="SSF49503">
    <property type="entry name" value="Cupredoxins"/>
    <property type="match status" value="1"/>
</dbReference>
<dbReference type="SUPFAM" id="SSF81464">
    <property type="entry name" value="Cytochrome c oxidase subunit II-like, transmembrane region"/>
    <property type="match status" value="1"/>
</dbReference>
<dbReference type="PROSITE" id="PS00078">
    <property type="entry name" value="COX2"/>
    <property type="match status" value="1"/>
</dbReference>
<dbReference type="PROSITE" id="PS50857">
    <property type="entry name" value="COX2_CUA"/>
    <property type="match status" value="1"/>
</dbReference>
<dbReference type="PROSITE" id="PS50999">
    <property type="entry name" value="COX2_TM"/>
    <property type="match status" value="1"/>
</dbReference>
<sequence length="228" mass="26201">MTTWANMNLQDSASPIMEQLIYFHDHALMIIIMILMVVSYMMIAMVFNKYINRFLLEGQMIELAWTIAPAVILIFIAVPSLRLLYLMDEINTPTVTLKTIGHQWYWSYEYSDFAKVEFDSYMIPQDEMDHSMFRLLDVDNRAVLPMNTFIRIIVTAADVLHSWTIPSLGVKADATPGRLNQVSFLINRPGVLYGQCSEICGANHSFMPIVIESISTNGFINWILKMNM</sequence>
<gene>
    <name type="primary">COII</name>
</gene>
<protein>
    <recommendedName>
        <fullName>Cytochrome c oxidase subunit 2</fullName>
        <ecNumber>7.1.1.9</ecNumber>
    </recommendedName>
    <alternativeName>
        <fullName>Cytochrome c oxidase polypeptide II</fullName>
    </alternativeName>
</protein>
<comment type="function">
    <text evidence="1">Component of the cytochrome c oxidase, the last enzyme in the mitochondrial electron transport chain which drives oxidative phosphorylation. The respiratory chain contains 3 multisubunit complexes succinate dehydrogenase (complex II, CII), ubiquinol-cytochrome c oxidoreductase (cytochrome b-c1 complex, complex III, CIII) and cytochrome c oxidase (complex IV, CIV), that cooperate to transfer electrons derived from NADH and succinate to molecular oxygen, creating an electrochemical gradient over the inner membrane that drives transmembrane transport and the ATP synthase. Cytochrome c oxidase is the component of the respiratory chain that catalyzes the reduction of oxygen to water. Electrons originating from reduced cytochrome c in the intermembrane space (IMS) are transferred via the dinuclear copper A center (CU(A)) of subunit 2 and heme A of subunit 1 to the active site in subunit 1, a binuclear center (BNC) formed by heme A3 and copper B (CU(B)). The BNC reduces molecular oxygen to 2 water molecules using 4 electrons from cytochrome c in the IMS and 4 protons from the mitochondrial matrix.</text>
</comment>
<comment type="catalytic activity">
    <reaction evidence="1">
        <text>4 Fe(II)-[cytochrome c] + O2 + 8 H(+)(in) = 4 Fe(III)-[cytochrome c] + 2 H2O + 4 H(+)(out)</text>
        <dbReference type="Rhea" id="RHEA:11436"/>
        <dbReference type="Rhea" id="RHEA-COMP:10350"/>
        <dbReference type="Rhea" id="RHEA-COMP:14399"/>
        <dbReference type="ChEBI" id="CHEBI:15377"/>
        <dbReference type="ChEBI" id="CHEBI:15378"/>
        <dbReference type="ChEBI" id="CHEBI:15379"/>
        <dbReference type="ChEBI" id="CHEBI:29033"/>
        <dbReference type="ChEBI" id="CHEBI:29034"/>
        <dbReference type="EC" id="7.1.1.9"/>
    </reaction>
    <physiologicalReaction direction="left-to-right" evidence="1">
        <dbReference type="Rhea" id="RHEA:11437"/>
    </physiologicalReaction>
</comment>
<comment type="cofactor">
    <cofactor evidence="1">
        <name>Cu cation</name>
        <dbReference type="ChEBI" id="CHEBI:23378"/>
    </cofactor>
    <text evidence="1">Binds a dinuclear copper A center per subunit.</text>
</comment>
<comment type="subunit">
    <text evidence="1">Component of the cytochrome c oxidase (complex IV, CIV), a multisubunit enzyme composed of a catalytic core of 3 subunits and several supernumerary subunits. The complex exists as a monomer or a dimer and forms supercomplexes (SCs) in the inner mitochondrial membrane with ubiquinol-cytochrome c oxidoreductase (cytochrome b-c1 complex, complex III, CIII).</text>
</comment>
<comment type="subcellular location">
    <subcellularLocation>
        <location evidence="1">Mitochondrion inner membrane</location>
        <topology evidence="1">Multi-pass membrane protein</topology>
    </subcellularLocation>
</comment>
<comment type="similarity">
    <text evidence="3">Belongs to the cytochrome c oxidase subunit 2 family.</text>
</comment>
<geneLocation type="mitochondrion"/>